<name>UVRB_RICRS</name>
<comment type="function">
    <text evidence="1">The UvrABC repair system catalyzes the recognition and processing of DNA lesions. A damage recognition complex composed of 2 UvrA and 2 UvrB subunits scans DNA for abnormalities. Upon binding of the UvrA(2)B(2) complex to a putative damaged site, the DNA wraps around one UvrB monomer. DNA wrap is dependent on ATP binding by UvrB and probably causes local melting of the DNA helix, facilitating insertion of UvrB beta-hairpin between the DNA strands. Then UvrB probes one DNA strand for the presence of a lesion. If a lesion is found the UvrA subunits dissociate and the UvrB-DNA preincision complex is formed. This complex is subsequently bound by UvrC and the second UvrB is released. If no lesion is found, the DNA wraps around the other UvrB subunit that will check the other stand for damage.</text>
</comment>
<comment type="subunit">
    <text evidence="1">Forms a heterotetramer with UvrA during the search for lesions. Interacts with UvrC in an incision complex.</text>
</comment>
<comment type="subcellular location">
    <subcellularLocation>
        <location evidence="1">Cytoplasm</location>
    </subcellularLocation>
</comment>
<comment type="domain">
    <text evidence="1">The beta-hairpin motif is involved in DNA binding.</text>
</comment>
<comment type="similarity">
    <text evidence="1">Belongs to the UvrB family.</text>
</comment>
<sequence length="661" mass="75299">MNNFSIISEYKPAGDQPKAIDEIIAGLSSKKRSQMLLGITGSGKTFTMANIIERTNRPTLIMAHNKTLAAQIYSEMKSLFPKNAVEYFVSYYDYYQPEAYIARTDTFIEKDSSINEQIDLMRHAATRSLLERRDVIVVSSVSCIYGLGSPDLYYQMVVNLEPGQSYLRDQLLNDLINLQYERNDIGFERGCFRVKGDNIDIFPSHYSDKAWRLSFFGNELEYIHEFDPLTGEKLAKLDKAIVFGNSHFVMPQETVNNAISGIEEELQKRLEFLKSQDKPLETQRLNQRTQYDLEMLTETGSCKGVENYSRFFTGRNAGEPPPTLFEYLPEDALLFVDESHVSVPQIRAMYNGDRARKKVLVEHGFRLPSALDNRPLKFEEWDKFRPQTVFVSATPGPFELEETGGTVVELIIRPTGLLDPECIIKPATNQVEDLISEIQTTIAQGFRVLVTTLTKKMAEDLTAYLQELKYKTSYLHSNVHTLERIEILRDLRQGTIDVLVGINLLREGLDIPECGLVAILDADKEGFLRSEVSLIQTIGRAARNSAGRVILYADKMTKSIDKAVSETLRRRQIQQEYNEKHGIIPKTINRAIHALAEFEKIDSKLDKKQAHTLFDNPAKLKTHIDKLKKEMLKAASNLEFEQAVKLRDQLKTLEEAALELS</sequence>
<evidence type="ECO:0000255" key="1">
    <source>
        <dbReference type="HAMAP-Rule" id="MF_00204"/>
    </source>
</evidence>
<gene>
    <name evidence="1" type="primary">uvrB</name>
    <name type="ordered locus">A1G_01520</name>
</gene>
<protein>
    <recommendedName>
        <fullName evidence="1">UvrABC system protein B</fullName>
        <shortName evidence="1">Protein UvrB</shortName>
    </recommendedName>
    <alternativeName>
        <fullName evidence="1">Excinuclease ABC subunit B</fullName>
    </alternativeName>
</protein>
<accession>A8GR53</accession>
<feature type="chain" id="PRO_1000077918" description="UvrABC system protein B">
    <location>
        <begin position="1"/>
        <end position="661"/>
    </location>
</feature>
<feature type="domain" description="Helicase ATP-binding" evidence="1">
    <location>
        <begin position="25"/>
        <end position="182"/>
    </location>
</feature>
<feature type="domain" description="Helicase C-terminal" evidence="1">
    <location>
        <begin position="430"/>
        <end position="592"/>
    </location>
</feature>
<feature type="domain" description="UVR" evidence="1">
    <location>
        <begin position="621"/>
        <end position="656"/>
    </location>
</feature>
<feature type="short sequence motif" description="Beta-hairpin">
    <location>
        <begin position="91"/>
        <end position="114"/>
    </location>
</feature>
<feature type="binding site" evidence="1">
    <location>
        <begin position="38"/>
        <end position="45"/>
    </location>
    <ligand>
        <name>ATP</name>
        <dbReference type="ChEBI" id="CHEBI:30616"/>
    </ligand>
</feature>
<keyword id="KW-0067">ATP-binding</keyword>
<keyword id="KW-0963">Cytoplasm</keyword>
<keyword id="KW-0227">DNA damage</keyword>
<keyword id="KW-0228">DNA excision</keyword>
<keyword id="KW-0234">DNA repair</keyword>
<keyword id="KW-0267">Excision nuclease</keyword>
<keyword id="KW-0347">Helicase</keyword>
<keyword id="KW-0378">Hydrolase</keyword>
<keyword id="KW-0547">Nucleotide-binding</keyword>
<keyword id="KW-0742">SOS response</keyword>
<proteinExistence type="inferred from homology"/>
<dbReference type="EMBL" id="CP000848">
    <property type="protein sequence ID" value="ABV75878.1"/>
    <property type="molecule type" value="Genomic_DNA"/>
</dbReference>
<dbReference type="RefSeq" id="WP_012150483.1">
    <property type="nucleotide sequence ID" value="NZ_CP121767.1"/>
</dbReference>
<dbReference type="SMR" id="A8GR53"/>
<dbReference type="GeneID" id="79937049"/>
<dbReference type="KEGG" id="rri:A1G_01520"/>
<dbReference type="HOGENOM" id="CLU_009621_2_1_5"/>
<dbReference type="Proteomes" id="UP000006832">
    <property type="component" value="Chromosome"/>
</dbReference>
<dbReference type="GO" id="GO:0005737">
    <property type="term" value="C:cytoplasm"/>
    <property type="evidence" value="ECO:0007669"/>
    <property type="project" value="UniProtKB-SubCell"/>
</dbReference>
<dbReference type="GO" id="GO:0009380">
    <property type="term" value="C:excinuclease repair complex"/>
    <property type="evidence" value="ECO:0007669"/>
    <property type="project" value="InterPro"/>
</dbReference>
<dbReference type="GO" id="GO:0005524">
    <property type="term" value="F:ATP binding"/>
    <property type="evidence" value="ECO:0007669"/>
    <property type="project" value="UniProtKB-UniRule"/>
</dbReference>
<dbReference type="GO" id="GO:0016887">
    <property type="term" value="F:ATP hydrolysis activity"/>
    <property type="evidence" value="ECO:0007669"/>
    <property type="project" value="InterPro"/>
</dbReference>
<dbReference type="GO" id="GO:0003677">
    <property type="term" value="F:DNA binding"/>
    <property type="evidence" value="ECO:0007669"/>
    <property type="project" value="UniProtKB-UniRule"/>
</dbReference>
<dbReference type="GO" id="GO:0009381">
    <property type="term" value="F:excinuclease ABC activity"/>
    <property type="evidence" value="ECO:0007669"/>
    <property type="project" value="UniProtKB-UniRule"/>
</dbReference>
<dbReference type="GO" id="GO:0004386">
    <property type="term" value="F:helicase activity"/>
    <property type="evidence" value="ECO:0007669"/>
    <property type="project" value="UniProtKB-KW"/>
</dbReference>
<dbReference type="GO" id="GO:0006289">
    <property type="term" value="P:nucleotide-excision repair"/>
    <property type="evidence" value="ECO:0007669"/>
    <property type="project" value="UniProtKB-UniRule"/>
</dbReference>
<dbReference type="GO" id="GO:0009432">
    <property type="term" value="P:SOS response"/>
    <property type="evidence" value="ECO:0007669"/>
    <property type="project" value="UniProtKB-UniRule"/>
</dbReference>
<dbReference type="CDD" id="cd17916">
    <property type="entry name" value="DEXHc_UvrB"/>
    <property type="match status" value="1"/>
</dbReference>
<dbReference type="CDD" id="cd18790">
    <property type="entry name" value="SF2_C_UvrB"/>
    <property type="match status" value="1"/>
</dbReference>
<dbReference type="Gene3D" id="3.40.50.300">
    <property type="entry name" value="P-loop containing nucleotide triphosphate hydrolases"/>
    <property type="match status" value="3"/>
</dbReference>
<dbReference type="Gene3D" id="4.10.860.10">
    <property type="entry name" value="UVR domain"/>
    <property type="match status" value="1"/>
</dbReference>
<dbReference type="HAMAP" id="MF_00204">
    <property type="entry name" value="UvrB"/>
    <property type="match status" value="1"/>
</dbReference>
<dbReference type="InterPro" id="IPR006935">
    <property type="entry name" value="Helicase/UvrB_N"/>
</dbReference>
<dbReference type="InterPro" id="IPR014001">
    <property type="entry name" value="Helicase_ATP-bd"/>
</dbReference>
<dbReference type="InterPro" id="IPR001650">
    <property type="entry name" value="Helicase_C-like"/>
</dbReference>
<dbReference type="InterPro" id="IPR027417">
    <property type="entry name" value="P-loop_NTPase"/>
</dbReference>
<dbReference type="InterPro" id="IPR001943">
    <property type="entry name" value="UVR_dom"/>
</dbReference>
<dbReference type="InterPro" id="IPR036876">
    <property type="entry name" value="UVR_dom_sf"/>
</dbReference>
<dbReference type="InterPro" id="IPR004807">
    <property type="entry name" value="UvrB"/>
</dbReference>
<dbReference type="InterPro" id="IPR041471">
    <property type="entry name" value="UvrB_inter"/>
</dbReference>
<dbReference type="InterPro" id="IPR024759">
    <property type="entry name" value="UvrB_YAD/RRR_dom"/>
</dbReference>
<dbReference type="NCBIfam" id="NF003673">
    <property type="entry name" value="PRK05298.1"/>
    <property type="match status" value="1"/>
</dbReference>
<dbReference type="NCBIfam" id="TIGR00631">
    <property type="entry name" value="uvrb"/>
    <property type="match status" value="1"/>
</dbReference>
<dbReference type="PANTHER" id="PTHR24029">
    <property type="entry name" value="UVRABC SYSTEM PROTEIN B"/>
    <property type="match status" value="1"/>
</dbReference>
<dbReference type="PANTHER" id="PTHR24029:SF0">
    <property type="entry name" value="UVRABC SYSTEM PROTEIN B"/>
    <property type="match status" value="1"/>
</dbReference>
<dbReference type="Pfam" id="PF00271">
    <property type="entry name" value="Helicase_C"/>
    <property type="match status" value="1"/>
</dbReference>
<dbReference type="Pfam" id="PF04851">
    <property type="entry name" value="ResIII"/>
    <property type="match status" value="1"/>
</dbReference>
<dbReference type="Pfam" id="PF02151">
    <property type="entry name" value="UVR"/>
    <property type="match status" value="1"/>
</dbReference>
<dbReference type="Pfam" id="PF12344">
    <property type="entry name" value="UvrB"/>
    <property type="match status" value="1"/>
</dbReference>
<dbReference type="Pfam" id="PF17757">
    <property type="entry name" value="UvrB_inter"/>
    <property type="match status" value="1"/>
</dbReference>
<dbReference type="SMART" id="SM00487">
    <property type="entry name" value="DEXDc"/>
    <property type="match status" value="1"/>
</dbReference>
<dbReference type="SMART" id="SM00490">
    <property type="entry name" value="HELICc"/>
    <property type="match status" value="1"/>
</dbReference>
<dbReference type="SUPFAM" id="SSF46600">
    <property type="entry name" value="C-terminal UvrC-binding domain of UvrB"/>
    <property type="match status" value="1"/>
</dbReference>
<dbReference type="SUPFAM" id="SSF52540">
    <property type="entry name" value="P-loop containing nucleoside triphosphate hydrolases"/>
    <property type="match status" value="2"/>
</dbReference>
<dbReference type="PROSITE" id="PS51192">
    <property type="entry name" value="HELICASE_ATP_BIND_1"/>
    <property type="match status" value="1"/>
</dbReference>
<dbReference type="PROSITE" id="PS51194">
    <property type="entry name" value="HELICASE_CTER"/>
    <property type="match status" value="1"/>
</dbReference>
<dbReference type="PROSITE" id="PS50151">
    <property type="entry name" value="UVR"/>
    <property type="match status" value="1"/>
</dbReference>
<organism>
    <name type="scientific">Rickettsia rickettsii (strain Sheila Smith)</name>
    <dbReference type="NCBI Taxonomy" id="392021"/>
    <lineage>
        <taxon>Bacteria</taxon>
        <taxon>Pseudomonadati</taxon>
        <taxon>Pseudomonadota</taxon>
        <taxon>Alphaproteobacteria</taxon>
        <taxon>Rickettsiales</taxon>
        <taxon>Rickettsiaceae</taxon>
        <taxon>Rickettsieae</taxon>
        <taxon>Rickettsia</taxon>
        <taxon>spotted fever group</taxon>
    </lineage>
</organism>
<reference key="1">
    <citation type="submission" date="2007-09" db="EMBL/GenBank/DDBJ databases">
        <title>Complete genome sequence of Rickettsia rickettsii.</title>
        <authorList>
            <person name="Madan A."/>
            <person name="Fahey J."/>
            <person name="Helton E."/>
            <person name="Ketteman M."/>
            <person name="Madan A."/>
            <person name="Rodrigues S."/>
            <person name="Sanchez A."/>
            <person name="Dasch G."/>
            <person name="Eremeeva M."/>
        </authorList>
    </citation>
    <scope>NUCLEOTIDE SEQUENCE [LARGE SCALE GENOMIC DNA]</scope>
    <source>
        <strain>Sheila Smith</strain>
    </source>
</reference>